<name>WHIA_STRSY</name>
<feature type="chain" id="PRO_0000376594" description="Probable cell division protein WhiA">
    <location>
        <begin position="1"/>
        <end position="305"/>
    </location>
</feature>
<feature type="DNA-binding region" description="H-T-H motif" evidence="1">
    <location>
        <begin position="272"/>
        <end position="305"/>
    </location>
</feature>
<protein>
    <recommendedName>
        <fullName evidence="1">Probable cell division protein WhiA</fullName>
    </recommendedName>
</protein>
<evidence type="ECO:0000255" key="1">
    <source>
        <dbReference type="HAMAP-Rule" id="MF_01420"/>
    </source>
</evidence>
<gene>
    <name evidence="1" type="primary">whiA</name>
    <name type="ordered locus">SSU05_0622</name>
</gene>
<proteinExistence type="inferred from homology"/>
<dbReference type="EMBL" id="CP000407">
    <property type="protein sequence ID" value="ABP89588.1"/>
    <property type="molecule type" value="Genomic_DNA"/>
</dbReference>
<dbReference type="SMR" id="A4VTZ9"/>
<dbReference type="STRING" id="391295.SSU05_0622"/>
<dbReference type="KEGG" id="ssu:SSU05_0622"/>
<dbReference type="eggNOG" id="COG1481">
    <property type="taxonomic scope" value="Bacteria"/>
</dbReference>
<dbReference type="HOGENOM" id="CLU_053282_0_0_9"/>
<dbReference type="GO" id="GO:0003677">
    <property type="term" value="F:DNA binding"/>
    <property type="evidence" value="ECO:0007669"/>
    <property type="project" value="UniProtKB-UniRule"/>
</dbReference>
<dbReference type="GO" id="GO:0051301">
    <property type="term" value="P:cell division"/>
    <property type="evidence" value="ECO:0007669"/>
    <property type="project" value="UniProtKB-UniRule"/>
</dbReference>
<dbReference type="GO" id="GO:0043937">
    <property type="term" value="P:regulation of sporulation"/>
    <property type="evidence" value="ECO:0007669"/>
    <property type="project" value="InterPro"/>
</dbReference>
<dbReference type="Gene3D" id="3.10.28.10">
    <property type="entry name" value="Homing endonucleases"/>
    <property type="match status" value="1"/>
</dbReference>
<dbReference type="HAMAP" id="MF_01420">
    <property type="entry name" value="HTH_type_WhiA"/>
    <property type="match status" value="1"/>
</dbReference>
<dbReference type="InterPro" id="IPR027434">
    <property type="entry name" value="Homing_endonucl"/>
</dbReference>
<dbReference type="InterPro" id="IPR018478">
    <property type="entry name" value="Sporu_reg_WhiA_N_dom"/>
</dbReference>
<dbReference type="InterPro" id="IPR003802">
    <property type="entry name" value="Sporulation_regulator_WhiA"/>
</dbReference>
<dbReference type="InterPro" id="IPR023054">
    <property type="entry name" value="Sporulation_regulator_WhiA_C"/>
</dbReference>
<dbReference type="InterPro" id="IPR039518">
    <property type="entry name" value="WhiA_LAGLIDADG_dom"/>
</dbReference>
<dbReference type="NCBIfam" id="TIGR00647">
    <property type="entry name" value="DNA_bind_WhiA"/>
    <property type="match status" value="1"/>
</dbReference>
<dbReference type="PANTHER" id="PTHR37307">
    <property type="entry name" value="CELL DIVISION PROTEIN WHIA-RELATED"/>
    <property type="match status" value="1"/>
</dbReference>
<dbReference type="PANTHER" id="PTHR37307:SF1">
    <property type="entry name" value="CELL DIVISION PROTEIN WHIA-RELATED"/>
    <property type="match status" value="1"/>
</dbReference>
<dbReference type="Pfam" id="PF02650">
    <property type="entry name" value="HTH_WhiA"/>
    <property type="match status" value="1"/>
</dbReference>
<dbReference type="Pfam" id="PF14527">
    <property type="entry name" value="LAGLIDADG_WhiA"/>
    <property type="match status" value="1"/>
</dbReference>
<dbReference type="Pfam" id="PF10298">
    <property type="entry name" value="WhiA_N"/>
    <property type="match status" value="1"/>
</dbReference>
<dbReference type="SUPFAM" id="SSF55608">
    <property type="entry name" value="Homing endonucleases"/>
    <property type="match status" value="1"/>
</dbReference>
<comment type="function">
    <text evidence="1">Involved in cell division and chromosome segregation.</text>
</comment>
<comment type="similarity">
    <text evidence="1">Belongs to the WhiA family.</text>
</comment>
<reference key="1">
    <citation type="journal article" date="2007" name="PLoS ONE">
        <title>A glimpse of streptococcal toxic shock syndrome from comparative genomics of S. suis 2 Chinese isolates.</title>
        <authorList>
            <person name="Chen C."/>
            <person name="Tang J."/>
            <person name="Dong W."/>
            <person name="Wang C."/>
            <person name="Feng Y."/>
            <person name="Wang J."/>
            <person name="Zheng F."/>
            <person name="Pan X."/>
            <person name="Liu D."/>
            <person name="Li M."/>
            <person name="Song Y."/>
            <person name="Zhu X."/>
            <person name="Sun H."/>
            <person name="Feng T."/>
            <person name="Guo Z."/>
            <person name="Ju A."/>
            <person name="Ge J."/>
            <person name="Dong Y."/>
            <person name="Sun W."/>
            <person name="Jiang Y."/>
            <person name="Wang J."/>
            <person name="Yan J."/>
            <person name="Yang H."/>
            <person name="Wang X."/>
            <person name="Gao G.F."/>
            <person name="Yang R."/>
            <person name="Wang J."/>
            <person name="Yu J."/>
        </authorList>
    </citation>
    <scope>NUCLEOTIDE SEQUENCE [LARGE SCALE GENOMIC DNA]</scope>
    <source>
        <strain>05ZYH33</strain>
    </source>
</reference>
<keyword id="KW-0131">Cell cycle</keyword>
<keyword id="KW-0132">Cell division</keyword>
<keyword id="KW-0238">DNA-binding</keyword>
<sequence length="305" mass="34029">MSFTVQVKEELLLQSSQNKSELSAIIKLSGSLGLASSGLTLSISTENAKIARHIYELLLHFYQIKAEIRHHQKPNLKKNRVYAVLIEDGVNEILNDLHLADSFFGLETGISPLVLENDSWSQAYLRGAFLAAGSVKDPEKGKYQLEIASVYSDHANDLANLMQKFLLDAKVIERSKGTITYLQRAEDIMDFLLVIGAEETKTEFENVKLLREARNDLNRATNAEAANIAKTVNASMKTINNIIKIMDTIGLDQLSGDLQEIAQLRIQHPDYSIQQLADSLTVPITKSGVNHRLRKINKIADELTD</sequence>
<organism>
    <name type="scientific">Streptococcus suis (strain 05ZYH33)</name>
    <dbReference type="NCBI Taxonomy" id="391295"/>
    <lineage>
        <taxon>Bacteria</taxon>
        <taxon>Bacillati</taxon>
        <taxon>Bacillota</taxon>
        <taxon>Bacilli</taxon>
        <taxon>Lactobacillales</taxon>
        <taxon>Streptococcaceae</taxon>
        <taxon>Streptococcus</taxon>
    </lineage>
</organism>
<accession>A4VTZ9</accession>